<evidence type="ECO:0000255" key="1">
    <source>
        <dbReference type="PROSITE-ProRule" id="PRU00267"/>
    </source>
</evidence>
<name>AMA2_ALLMI</name>
<reference key="1">
    <citation type="journal article" date="1993" name="PCR Methods Appl.">
        <title>PCR amplification of SRY-related gene sequences reveals evolutionary conservation of the SRY-box motif.</title>
        <authorList>
            <person name="Coriat A.M."/>
            <person name="Mueller U."/>
            <person name="Harry J.L."/>
            <person name="Uwanogho D."/>
            <person name="Sharpe P.T."/>
        </authorList>
    </citation>
    <scope>NUCLEOTIDE SEQUENCE [GENOMIC DNA]</scope>
</reference>
<comment type="subcellular location">
    <subcellularLocation>
        <location evidence="1">Nucleus</location>
    </subcellularLocation>
</comment>
<sequence>MALENPKMHNSEISKRLGAEWKLLSEAEKRPFIDEAKRLRAMHMKEYPNYKYRP</sequence>
<protein>
    <recommendedName>
        <fullName>SRY-related protein AMA2</fullName>
    </recommendedName>
</protein>
<accession>P40642</accession>
<feature type="chain" id="PRO_0000048795" description="SRY-related protein AMA2">
    <location>
        <begin position="1" status="less than"/>
        <end position="54" status="greater than"/>
    </location>
</feature>
<feature type="DNA-binding region" description="HMG box" evidence="1">
    <location>
        <begin position="1" status="less than"/>
        <end position="51"/>
    </location>
</feature>
<feature type="non-terminal residue">
    <location>
        <position position="1"/>
    </location>
</feature>
<feature type="non-terminal residue">
    <location>
        <position position="54"/>
    </location>
</feature>
<organism>
    <name type="scientific">Alligator mississippiensis</name>
    <name type="common">American alligator</name>
    <dbReference type="NCBI Taxonomy" id="8496"/>
    <lineage>
        <taxon>Eukaryota</taxon>
        <taxon>Metazoa</taxon>
        <taxon>Chordata</taxon>
        <taxon>Craniata</taxon>
        <taxon>Vertebrata</taxon>
        <taxon>Euteleostomi</taxon>
        <taxon>Archelosauria</taxon>
        <taxon>Archosauria</taxon>
        <taxon>Crocodylia</taxon>
        <taxon>Alligatoridae</taxon>
        <taxon>Alligatorinae</taxon>
        <taxon>Alligator</taxon>
    </lineage>
</organism>
<dbReference type="EMBL" id="M86318">
    <property type="protein sequence ID" value="AAA48531.1"/>
    <property type="molecule type" value="Genomic_DNA"/>
</dbReference>
<dbReference type="PIR" id="I50028">
    <property type="entry name" value="I50028"/>
</dbReference>
<dbReference type="SMR" id="P40642"/>
<dbReference type="GO" id="GO:0005634">
    <property type="term" value="C:nucleus"/>
    <property type="evidence" value="ECO:0007669"/>
    <property type="project" value="UniProtKB-SubCell"/>
</dbReference>
<dbReference type="GO" id="GO:0001228">
    <property type="term" value="F:DNA-binding transcription activator activity, RNA polymerase II-specific"/>
    <property type="evidence" value="ECO:0007669"/>
    <property type="project" value="TreeGrafter"/>
</dbReference>
<dbReference type="GO" id="GO:0000978">
    <property type="term" value="F:RNA polymerase II cis-regulatory region sequence-specific DNA binding"/>
    <property type="evidence" value="ECO:0007669"/>
    <property type="project" value="TreeGrafter"/>
</dbReference>
<dbReference type="GO" id="GO:0007420">
    <property type="term" value="P:brain development"/>
    <property type="evidence" value="ECO:0007669"/>
    <property type="project" value="TreeGrafter"/>
</dbReference>
<dbReference type="GO" id="GO:0000122">
    <property type="term" value="P:negative regulation of transcription by RNA polymerase II"/>
    <property type="evidence" value="ECO:0007669"/>
    <property type="project" value="TreeGrafter"/>
</dbReference>
<dbReference type="GO" id="GO:0030182">
    <property type="term" value="P:neuron differentiation"/>
    <property type="evidence" value="ECO:0007669"/>
    <property type="project" value="TreeGrafter"/>
</dbReference>
<dbReference type="FunFam" id="1.10.30.10:FF:000074">
    <property type="entry name" value="SRY-related protein AMA1"/>
    <property type="match status" value="1"/>
</dbReference>
<dbReference type="Gene3D" id="1.10.30.10">
    <property type="entry name" value="High mobility group box domain"/>
    <property type="match status" value="1"/>
</dbReference>
<dbReference type="InterPro" id="IPR009071">
    <property type="entry name" value="HMG_box_dom"/>
</dbReference>
<dbReference type="InterPro" id="IPR036910">
    <property type="entry name" value="HMG_box_dom_sf"/>
</dbReference>
<dbReference type="InterPro" id="IPR050140">
    <property type="entry name" value="SRY-related_HMG-box_TF-like"/>
</dbReference>
<dbReference type="PANTHER" id="PTHR10270:SF324">
    <property type="entry name" value="SOX DOMAIN-CONTAINING PROTEIN DICHAETE-RELATED"/>
    <property type="match status" value="1"/>
</dbReference>
<dbReference type="PANTHER" id="PTHR10270">
    <property type="entry name" value="SOX TRANSCRIPTION FACTOR"/>
    <property type="match status" value="1"/>
</dbReference>
<dbReference type="Pfam" id="PF00505">
    <property type="entry name" value="HMG_box"/>
    <property type="match status" value="1"/>
</dbReference>
<dbReference type="SMART" id="SM00398">
    <property type="entry name" value="HMG"/>
    <property type="match status" value="1"/>
</dbReference>
<dbReference type="SUPFAM" id="SSF47095">
    <property type="entry name" value="HMG-box"/>
    <property type="match status" value="1"/>
</dbReference>
<dbReference type="PROSITE" id="PS50118">
    <property type="entry name" value="HMG_BOX_2"/>
    <property type="match status" value="1"/>
</dbReference>
<keyword id="KW-0238">DNA-binding</keyword>
<keyword id="KW-0539">Nucleus</keyword>
<proteinExistence type="inferred from homology"/>